<feature type="chain" id="PRO_0000398567" description="Interferon-induced transmembrane protein 3">
    <location>
        <begin position="1"/>
        <end position="137"/>
    </location>
</feature>
<feature type="topological domain" description="Cytoplasmic" evidence="2">
    <location>
        <begin position="1"/>
        <end position="57"/>
    </location>
</feature>
<feature type="intramembrane region" description="Helical" evidence="2">
    <location>
        <begin position="58"/>
        <end position="78"/>
    </location>
</feature>
<feature type="topological domain" description="Cytoplasmic" evidence="2">
    <location>
        <begin position="79"/>
        <end position="109"/>
    </location>
</feature>
<feature type="transmembrane region" description="Helical" evidence="2">
    <location>
        <begin position="110"/>
        <end position="130"/>
    </location>
</feature>
<feature type="topological domain" description="Extracellular" evidence="2">
    <location>
        <begin position="131"/>
        <end position="137"/>
    </location>
</feature>
<feature type="region of interest" description="Interaction with SPP1" evidence="1">
    <location>
        <begin position="60"/>
        <end position="93"/>
    </location>
</feature>
<feature type="region of interest" description="Interaction with VAPA" evidence="1">
    <location>
        <begin position="108"/>
        <end position="133"/>
    </location>
</feature>
<feature type="modified residue" description="Phosphotyrosine" evidence="1">
    <location>
        <position position="20"/>
    </location>
</feature>
<feature type="modified residue" description="Phosphotyrosine" evidence="16">
    <location>
        <position position="27"/>
    </location>
</feature>
<feature type="lipid moiety-binding region" description="S-palmitoyl cysteine" evidence="1">
    <location>
        <position position="71"/>
    </location>
</feature>
<feature type="lipid moiety-binding region" description="S-palmitoyl cysteine" evidence="1">
    <location>
        <position position="72"/>
    </location>
</feature>
<feature type="lipid moiety-binding region" description="S-palmitoyl cysteine" evidence="1">
    <location>
        <position position="105"/>
    </location>
</feature>
<feature type="cross-link" description="Glycyl lysine isopeptide (Lys-Gly) (interchain with G-Cter in ubiquitin)" evidence="1">
    <location>
        <position position="24"/>
    </location>
</feature>
<feature type="cross-link" description="Glycyl lysine isopeptide (Lys-Gly) (interchain with G-Cter in ubiquitin)" evidence="1">
    <location>
        <position position="83"/>
    </location>
</feature>
<feature type="cross-link" description="Glycyl lysine isopeptide (Lys-Gly) (interchain with G-Cter in ubiquitin)" evidence="1">
    <location>
        <position position="88"/>
    </location>
</feature>
<feature type="cross-link" description="Glycyl lysine isopeptide (Lys-Gly) (interchain with G-Cter in ubiquitin)" evidence="1">
    <location>
        <position position="104"/>
    </location>
</feature>
<feature type="mutagenesis site" description="Accumulates at the plasma membrane. No effect on anti-SARS-CoV-2 activity." evidence="12">
    <original>Y</original>
    <variation>A</variation>
    <location>
        <position position="20"/>
    </location>
</feature>
<feature type="mutagenesis site" description="No effect on SARS-CoV-2 infection; when associated with A-105." evidence="12">
    <original>CC</original>
    <variation>AA</variation>
    <location>
        <begin position="71"/>
        <end position="72"/>
    </location>
</feature>
<feature type="mutagenesis site" description="No effect on SARS-CoV-2 infection; when associated with 71-A-A-72." evidence="12">
    <original>C</original>
    <variation>A</variation>
    <location>
        <position position="105"/>
    </location>
</feature>
<feature type="sequence conflict" description="In Ref. 3; BAB25347." evidence="13" ref="3">
    <original>L</original>
    <variation>F</variation>
    <location>
        <position position="130"/>
    </location>
</feature>
<reference key="1">
    <citation type="journal article" date="2002" name="Mech. Dev.">
        <title>Developmentally regulated expression of mil-1 and mil-2, mouse interferon-induced transmembrane protein like genes, during formation and differentiation of primordial germ cells.</title>
        <authorList>
            <person name="Tanaka S.S."/>
            <person name="Matsui Y."/>
        </authorList>
    </citation>
    <scope>NUCLEOTIDE SEQUENCE [MRNA]</scope>
    <scope>DEVELOPMENTAL STAGE</scope>
</reference>
<reference key="2">
    <citation type="journal article" date="2002" name="Nature">
        <title>A molecular programme for the specification of germ cell fate in mice.</title>
        <authorList>
            <person name="Saitou M."/>
            <person name="Barton S.C."/>
            <person name="Surani M.A."/>
        </authorList>
    </citation>
    <scope>NUCLEOTIDE SEQUENCE [MRNA]</scope>
    <scope>FUNCTION</scope>
    <scope>SUBCELLULAR LOCATION</scope>
    <scope>DEVELOPMENTAL STAGE</scope>
    <source>
        <strain>129/SvEv</strain>
    </source>
</reference>
<reference key="3">
    <citation type="journal article" date="2004" name="Biochem. Biophys. Res. Commun.">
        <title>Cloning of IP15, a pancreatitis-induced gene whose expression inhibits cell growth.</title>
        <authorList>
            <person name="Ropolo A."/>
            <person name="Tomasini R."/>
            <person name="Grasso D."/>
            <person name="Dusetti N.J."/>
            <person name="Cerquetti M.C."/>
            <person name="Iovanna J.L."/>
            <person name="Vaccaro M.I."/>
        </authorList>
    </citation>
    <scope>NUCLEOTIDE SEQUENCE [MRNA]</scope>
    <scope>TISSUE SPECIFICITY</scope>
    <scope>INDUCTION</scope>
    <source>
        <strain>BALB/cJ</strain>
    </source>
</reference>
<reference key="4">
    <citation type="journal article" date="2005" name="Science">
        <title>The transcriptional landscape of the mammalian genome.</title>
        <authorList>
            <person name="Carninci P."/>
            <person name="Kasukawa T."/>
            <person name="Katayama S."/>
            <person name="Gough J."/>
            <person name="Frith M.C."/>
            <person name="Maeda N."/>
            <person name="Oyama R."/>
            <person name="Ravasi T."/>
            <person name="Lenhard B."/>
            <person name="Wells C."/>
            <person name="Kodzius R."/>
            <person name="Shimokawa K."/>
            <person name="Bajic V.B."/>
            <person name="Brenner S.E."/>
            <person name="Batalov S."/>
            <person name="Forrest A.R."/>
            <person name="Zavolan M."/>
            <person name="Davis M.J."/>
            <person name="Wilming L.G."/>
            <person name="Aidinis V."/>
            <person name="Allen J.E."/>
            <person name="Ambesi-Impiombato A."/>
            <person name="Apweiler R."/>
            <person name="Aturaliya R.N."/>
            <person name="Bailey T.L."/>
            <person name="Bansal M."/>
            <person name="Baxter L."/>
            <person name="Beisel K.W."/>
            <person name="Bersano T."/>
            <person name="Bono H."/>
            <person name="Chalk A.M."/>
            <person name="Chiu K.P."/>
            <person name="Choudhary V."/>
            <person name="Christoffels A."/>
            <person name="Clutterbuck D.R."/>
            <person name="Crowe M.L."/>
            <person name="Dalla E."/>
            <person name="Dalrymple B.P."/>
            <person name="de Bono B."/>
            <person name="Della Gatta G."/>
            <person name="di Bernardo D."/>
            <person name="Down T."/>
            <person name="Engstrom P."/>
            <person name="Fagiolini M."/>
            <person name="Faulkner G."/>
            <person name="Fletcher C.F."/>
            <person name="Fukushima T."/>
            <person name="Furuno M."/>
            <person name="Futaki S."/>
            <person name="Gariboldi M."/>
            <person name="Georgii-Hemming P."/>
            <person name="Gingeras T.R."/>
            <person name="Gojobori T."/>
            <person name="Green R.E."/>
            <person name="Gustincich S."/>
            <person name="Harbers M."/>
            <person name="Hayashi Y."/>
            <person name="Hensch T.K."/>
            <person name="Hirokawa N."/>
            <person name="Hill D."/>
            <person name="Huminiecki L."/>
            <person name="Iacono M."/>
            <person name="Ikeo K."/>
            <person name="Iwama A."/>
            <person name="Ishikawa T."/>
            <person name="Jakt M."/>
            <person name="Kanapin A."/>
            <person name="Katoh M."/>
            <person name="Kawasawa Y."/>
            <person name="Kelso J."/>
            <person name="Kitamura H."/>
            <person name="Kitano H."/>
            <person name="Kollias G."/>
            <person name="Krishnan S.P."/>
            <person name="Kruger A."/>
            <person name="Kummerfeld S.K."/>
            <person name="Kurochkin I.V."/>
            <person name="Lareau L.F."/>
            <person name="Lazarevic D."/>
            <person name="Lipovich L."/>
            <person name="Liu J."/>
            <person name="Liuni S."/>
            <person name="McWilliam S."/>
            <person name="Madan Babu M."/>
            <person name="Madera M."/>
            <person name="Marchionni L."/>
            <person name="Matsuda H."/>
            <person name="Matsuzawa S."/>
            <person name="Miki H."/>
            <person name="Mignone F."/>
            <person name="Miyake S."/>
            <person name="Morris K."/>
            <person name="Mottagui-Tabar S."/>
            <person name="Mulder N."/>
            <person name="Nakano N."/>
            <person name="Nakauchi H."/>
            <person name="Ng P."/>
            <person name="Nilsson R."/>
            <person name="Nishiguchi S."/>
            <person name="Nishikawa S."/>
            <person name="Nori F."/>
            <person name="Ohara O."/>
            <person name="Okazaki Y."/>
            <person name="Orlando V."/>
            <person name="Pang K.C."/>
            <person name="Pavan W.J."/>
            <person name="Pavesi G."/>
            <person name="Pesole G."/>
            <person name="Petrovsky N."/>
            <person name="Piazza S."/>
            <person name="Reed J."/>
            <person name="Reid J.F."/>
            <person name="Ring B.Z."/>
            <person name="Ringwald M."/>
            <person name="Rost B."/>
            <person name="Ruan Y."/>
            <person name="Salzberg S.L."/>
            <person name="Sandelin A."/>
            <person name="Schneider C."/>
            <person name="Schoenbach C."/>
            <person name="Sekiguchi K."/>
            <person name="Semple C.A."/>
            <person name="Seno S."/>
            <person name="Sessa L."/>
            <person name="Sheng Y."/>
            <person name="Shibata Y."/>
            <person name="Shimada H."/>
            <person name="Shimada K."/>
            <person name="Silva D."/>
            <person name="Sinclair B."/>
            <person name="Sperling S."/>
            <person name="Stupka E."/>
            <person name="Sugiura K."/>
            <person name="Sultana R."/>
            <person name="Takenaka Y."/>
            <person name="Taki K."/>
            <person name="Tammoja K."/>
            <person name="Tan S.L."/>
            <person name="Tang S."/>
            <person name="Taylor M.S."/>
            <person name="Tegner J."/>
            <person name="Teichmann S.A."/>
            <person name="Ueda H.R."/>
            <person name="van Nimwegen E."/>
            <person name="Verardo R."/>
            <person name="Wei C.L."/>
            <person name="Yagi K."/>
            <person name="Yamanishi H."/>
            <person name="Zabarovsky E."/>
            <person name="Zhu S."/>
            <person name="Zimmer A."/>
            <person name="Hide W."/>
            <person name="Bult C."/>
            <person name="Grimmond S.M."/>
            <person name="Teasdale R.D."/>
            <person name="Liu E.T."/>
            <person name="Brusic V."/>
            <person name="Quackenbush J."/>
            <person name="Wahlestedt C."/>
            <person name="Mattick J.S."/>
            <person name="Hume D.A."/>
            <person name="Kai C."/>
            <person name="Sasaki D."/>
            <person name="Tomaru Y."/>
            <person name="Fukuda S."/>
            <person name="Kanamori-Katayama M."/>
            <person name="Suzuki M."/>
            <person name="Aoki J."/>
            <person name="Arakawa T."/>
            <person name="Iida J."/>
            <person name="Imamura K."/>
            <person name="Itoh M."/>
            <person name="Kato T."/>
            <person name="Kawaji H."/>
            <person name="Kawagashira N."/>
            <person name="Kawashima T."/>
            <person name="Kojima M."/>
            <person name="Kondo S."/>
            <person name="Konno H."/>
            <person name="Nakano K."/>
            <person name="Ninomiya N."/>
            <person name="Nishio T."/>
            <person name="Okada M."/>
            <person name="Plessy C."/>
            <person name="Shibata K."/>
            <person name="Shiraki T."/>
            <person name="Suzuki S."/>
            <person name="Tagami M."/>
            <person name="Waki K."/>
            <person name="Watahiki A."/>
            <person name="Okamura-Oho Y."/>
            <person name="Suzuki H."/>
            <person name="Kawai J."/>
            <person name="Hayashizaki Y."/>
        </authorList>
    </citation>
    <scope>NUCLEOTIDE SEQUENCE [LARGE SCALE MRNA]</scope>
    <source>
        <strain>C57BL/6J</strain>
        <tissue>Bone marrow</tissue>
        <tissue>Embryo</tissue>
        <tissue>Pancreas</tissue>
    </source>
</reference>
<reference key="5">
    <citation type="submission" date="2005-07" db="EMBL/GenBank/DDBJ databases">
        <authorList>
            <person name="Mural R.J."/>
            <person name="Adams M.D."/>
            <person name="Myers E.W."/>
            <person name="Smith H.O."/>
            <person name="Venter J.C."/>
        </authorList>
    </citation>
    <scope>NUCLEOTIDE SEQUENCE [LARGE SCALE GENOMIC DNA]</scope>
</reference>
<reference key="6">
    <citation type="journal article" date="2004" name="Genome Res.">
        <title>The status, quality, and expansion of the NIH full-length cDNA project: the Mammalian Gene Collection (MGC).</title>
        <authorList>
            <consortium name="The MGC Project Team"/>
        </authorList>
    </citation>
    <scope>NUCLEOTIDE SEQUENCE [LARGE SCALE MRNA]</scope>
    <source>
        <strain>FVB/N-3</strain>
        <tissue>Mammary tumor</tissue>
    </source>
</reference>
<reference key="7">
    <citation type="journal article" date="2003" name="BMC Dev. Biol.">
        <title>The fragilis interferon-inducible gene family of transmembrane proteins is associated with germ cell specification in mice.</title>
        <authorList>
            <person name="Lange U.C."/>
            <person name="Saitou M."/>
            <person name="Western P.S."/>
            <person name="Barton S.C."/>
            <person name="Surani M.A."/>
        </authorList>
    </citation>
    <scope>TISSUE SPECIFICITY</scope>
</reference>
<reference key="8">
    <citation type="journal article" date="2005" name="Dev. Cell">
        <title>IFITM/Mil/fragilis family proteins IFITM1 and IFITM3 play distinct roles in mouse primordial germ cell homing and repulsion.</title>
        <authorList>
            <person name="Tanaka S.S."/>
            <person name="Yamaguchi Y.L."/>
            <person name="Tsoi B."/>
            <person name="Lickert H."/>
            <person name="Tam P.P."/>
        </authorList>
    </citation>
    <scope>SUBCELLULAR LOCATION</scope>
    <scope>DEVELOPMENTAL STAGE</scope>
</reference>
<reference key="9">
    <citation type="journal article" date="2006" name="Genes Immun.">
        <title>Expression of the mouse fragilis gene products in immune cells and association with receptor signaling complexes.</title>
        <authorList>
            <person name="Smith R.A."/>
            <person name="Young J."/>
            <person name="Weis J.J."/>
            <person name="Weis J.H."/>
        </authorList>
    </citation>
    <scope>INTERACTION WITH CD81</scope>
</reference>
<reference key="10">
    <citation type="journal article" date="2008" name="Mol. Cell. Biol.">
        <title>Normal germ line establishment in mice carrying a deletion of the Ifitm/Fragilis gene family cluster.</title>
        <authorList>
            <person name="Lange U.C."/>
            <person name="Adams D.J."/>
            <person name="Lee C."/>
            <person name="Barton S."/>
            <person name="Schneider R."/>
            <person name="Bradley A."/>
            <person name="Surani M.A."/>
        </authorList>
    </citation>
    <scope>FUNCTION</scope>
</reference>
<reference key="11">
    <citation type="journal article" date="2009" name="Immunity">
        <title>The phagosomal proteome in interferon-gamma-activated macrophages.</title>
        <authorList>
            <person name="Trost M."/>
            <person name="English L."/>
            <person name="Lemieux S."/>
            <person name="Courcelles M."/>
            <person name="Desjardins M."/>
            <person name="Thibault P."/>
        </authorList>
    </citation>
    <scope>PHOSPHORYLATION [LARGE SCALE ANALYSIS] AT TYR-27</scope>
    <scope>IDENTIFICATION BY MASS SPECTROMETRY [LARGE SCALE ANALYSIS]</scope>
</reference>
<reference key="12">
    <citation type="journal article" date="2010" name="Cell">
        <title>A tissue-specific atlas of mouse protein phosphorylation and expression.</title>
        <authorList>
            <person name="Huttlin E.L."/>
            <person name="Jedrychowski M.P."/>
            <person name="Elias J.E."/>
            <person name="Goswami T."/>
            <person name="Rad R."/>
            <person name="Beausoleil S.A."/>
            <person name="Villen J."/>
            <person name="Haas W."/>
            <person name="Sowa M.E."/>
            <person name="Gygi S.P."/>
        </authorList>
    </citation>
    <scope>IDENTIFICATION BY MASS SPECTROMETRY [LARGE SCALE ANALYSIS]</scope>
    <source>
        <tissue>Brain</tissue>
        <tissue>Brown adipose tissue</tissue>
        <tissue>Heart</tissue>
        <tissue>Kidney</tissue>
        <tissue>Liver</tissue>
        <tissue>Lung</tissue>
        <tissue>Pancreas</tissue>
        <tissue>Spleen</tissue>
        <tissue>Testis</tissue>
    </source>
</reference>
<reference key="13">
    <citation type="journal article" date="2011" name="J. Interferon Cytokine Res.">
        <title>The small interferon-induced transmembrane genes and proteins.</title>
        <authorList>
            <person name="Siegrist F."/>
            <person name="Ebeling M."/>
            <person name="Certa U."/>
        </authorList>
    </citation>
    <scope>REVIEW</scope>
</reference>
<reference key="14">
    <citation type="journal article" date="2011" name="PLoS Pathog.">
        <title>Distinct patterns of IFITM-mediated restriction of filoviruses, SARS coronavirus, and influenza A virus.</title>
        <authorList>
            <person name="Huang I.C."/>
            <person name="Bailey C.C."/>
            <person name="Weyer J.L."/>
            <person name="Radoshitzky S.R."/>
            <person name="Becker M.M."/>
            <person name="Chiang J.J."/>
            <person name="Brass A.L."/>
            <person name="Ahmed A.A."/>
            <person name="Chi X."/>
            <person name="Dong L."/>
            <person name="Longobardi L.E."/>
            <person name="Boltz D."/>
            <person name="Kuhn J.H."/>
            <person name="Elledge S.J."/>
            <person name="Bavari S."/>
            <person name="Denison M.R."/>
            <person name="Choe H."/>
            <person name="Farzan M."/>
        </authorList>
    </citation>
    <scope>FUNCTION</scope>
</reference>
<reference key="15">
    <citation type="journal article" date="2012" name="Inn. Immun.">
        <title>Interferon-inducible transmembrane proteins of the innate immune response act as membrane organizers by influencing clathrin and v-ATPase localization and function.</title>
        <authorList>
            <person name="Wee Y.S."/>
            <person name="Roundy K.M."/>
            <person name="Weis J.J."/>
            <person name="Weis J.H."/>
        </authorList>
    </citation>
    <scope>FUNCTION</scope>
    <scope>INTERACTION WITH ATP6V0B</scope>
</reference>
<reference key="16">
    <citation type="journal article" date="2012" name="Nature">
        <title>IFITM3 restricts the morbidity and mortality associated with influenza.</title>
        <authorList>
            <person name="Everitt A.R."/>
            <person name="Clare S."/>
            <person name="Pertel T."/>
            <person name="John S.P."/>
            <person name="Wash R.S."/>
            <person name="Smith S.E."/>
            <person name="Chin C.R."/>
            <person name="Feeley E.M."/>
            <person name="Sims J.S."/>
            <person name="Adams D.J."/>
            <person name="Wise H.M."/>
            <person name="Kane L."/>
            <person name="Goulding D."/>
            <person name="Digard P."/>
            <person name="Anttila V."/>
            <person name="Baillie J.K."/>
            <person name="Walsh T.S."/>
            <person name="Hume D.A."/>
            <person name="Palotie A."/>
            <person name="Xue Y."/>
            <person name="Colonna V."/>
            <person name="Tyler-Smith C."/>
            <person name="Dunning J."/>
            <person name="Gordon S.B."/>
            <person name="Smyth R.L."/>
            <person name="Openshaw P.J."/>
            <person name="Dougan G."/>
            <person name="Brass A.L."/>
            <person name="Kellam P."/>
        </authorList>
    </citation>
    <scope>INVOLVEMENT IN SUSCEPTIBILITY TO SEVERE INFLUENZA INFECTION</scope>
</reference>
<reference key="17">
    <citation type="journal article" date="2012" name="PLoS ONE">
        <title>The dispanins: a novel gene family of ancient origin that contains 14 human members.</title>
        <authorList>
            <person name="Sallman Almen M."/>
            <person name="Bringeland N."/>
            <person name="Fredriksson R."/>
            <person name="Schioth H.B."/>
        </authorList>
    </citation>
    <scope>GENE FAMILY</scope>
</reference>
<reference key="18">
    <citation type="journal article" date="2021" name="EMBO J.">
        <title>Opposing activities of IFITM proteins in SARS-CoV-2 infection.</title>
        <authorList>
            <person name="Shi G."/>
            <person name="Kenney A.D."/>
            <person name="Kudryashova E."/>
            <person name="Zani A."/>
            <person name="Zhang L."/>
            <person name="Lai K.K."/>
            <person name="Hall-Stoodley L."/>
            <person name="Robinson R.T."/>
            <person name="Kudryashov D.S."/>
            <person name="Compton A.A."/>
            <person name="Yount J.S."/>
        </authorList>
    </citation>
    <scope>FUNCTION</scope>
    <scope>MUTAGENESIS OF TYR-20; 71-CYS-CYS-72 AND CYS-105</scope>
    <scope>SUBCELLULAR LOCATION</scope>
</reference>
<gene>
    <name evidence="15" type="primary">Ifitm3</name>
</gene>
<proteinExistence type="evidence at protein level"/>
<dbReference type="EMBL" id="AY082484">
    <property type="protein sequence ID" value="AAM03316.1"/>
    <property type="molecule type" value="mRNA"/>
</dbReference>
<dbReference type="EMBL" id="AY594690">
    <property type="protein sequence ID" value="AAT06089.1"/>
    <property type="molecule type" value="mRNA"/>
</dbReference>
<dbReference type="EMBL" id="AK003407">
    <property type="protein sequence ID" value="BAB22771.1"/>
    <property type="molecule type" value="mRNA"/>
</dbReference>
<dbReference type="EMBL" id="AK007916">
    <property type="protein sequence ID" value="BAB25347.1"/>
    <property type="molecule type" value="mRNA"/>
</dbReference>
<dbReference type="EMBL" id="AK007919">
    <property type="protein sequence ID" value="BAB25350.1"/>
    <property type="molecule type" value="mRNA"/>
</dbReference>
<dbReference type="EMBL" id="AK151890">
    <property type="protein sequence ID" value="BAE30774.1"/>
    <property type="molecule type" value="mRNA"/>
</dbReference>
<dbReference type="EMBL" id="CH466531">
    <property type="protein sequence ID" value="EDL17977.1"/>
    <property type="molecule type" value="Genomic_DNA"/>
</dbReference>
<dbReference type="EMBL" id="BC010291">
    <property type="protein sequence ID" value="AAH10291.1"/>
    <property type="molecule type" value="mRNA"/>
</dbReference>
<dbReference type="CCDS" id="CCDS21996.1"/>
<dbReference type="RefSeq" id="NP_079654.1">
    <property type="nucleotide sequence ID" value="NM_025378.2"/>
</dbReference>
<dbReference type="BioGRID" id="211244">
    <property type="interactions" value="10"/>
</dbReference>
<dbReference type="FunCoup" id="Q9CQW9">
    <property type="interactions" value="417"/>
</dbReference>
<dbReference type="STRING" id="10090.ENSMUSP00000026565"/>
<dbReference type="GlyGen" id="Q9CQW9">
    <property type="glycosylation" value="1 site, 1 O-linked glycan (1 site)"/>
</dbReference>
<dbReference type="iPTMnet" id="Q9CQW9"/>
<dbReference type="PhosphoSitePlus" id="Q9CQW9"/>
<dbReference type="SwissPalm" id="Q9CQW9"/>
<dbReference type="jPOST" id="Q9CQW9"/>
<dbReference type="PaxDb" id="10090-ENSMUSP00000026565"/>
<dbReference type="PeptideAtlas" id="Q9CQW9"/>
<dbReference type="ProteomicsDB" id="267199"/>
<dbReference type="Pumba" id="Q9CQW9"/>
<dbReference type="DNASU" id="66141"/>
<dbReference type="Ensembl" id="ENSMUST00000026565.7">
    <property type="protein sequence ID" value="ENSMUSP00000026565.7"/>
    <property type="gene ID" value="ENSMUSG00000025492.7"/>
</dbReference>
<dbReference type="GeneID" id="66141"/>
<dbReference type="KEGG" id="mmu:66141"/>
<dbReference type="UCSC" id="uc009kjc.1">
    <property type="organism name" value="mouse"/>
</dbReference>
<dbReference type="AGR" id="MGI:1913391"/>
<dbReference type="CTD" id="10410"/>
<dbReference type="MGI" id="MGI:1913391">
    <property type="gene designation" value="Ifitm3"/>
</dbReference>
<dbReference type="VEuPathDB" id="HostDB:ENSMUSG00000025492"/>
<dbReference type="eggNOG" id="ENOG502S9XK">
    <property type="taxonomic scope" value="Eukaryota"/>
</dbReference>
<dbReference type="GeneTree" id="ENSGT00950000182857"/>
<dbReference type="HOGENOM" id="CLU_124511_3_0_1"/>
<dbReference type="InParanoid" id="Q9CQW9"/>
<dbReference type="OMA" id="HIVWSIC"/>
<dbReference type="OrthoDB" id="9906841at2759"/>
<dbReference type="PhylomeDB" id="Q9CQW9"/>
<dbReference type="TreeFam" id="TF334894"/>
<dbReference type="Reactome" id="R-MMU-198933">
    <property type="pathway name" value="Immunoregulatory interactions between a Lymphoid and a non-Lymphoid cell"/>
</dbReference>
<dbReference type="BioGRID-ORCS" id="66141">
    <property type="hits" value="2 hits in 80 CRISPR screens"/>
</dbReference>
<dbReference type="ChiTaRS" id="Ifitm3">
    <property type="organism name" value="mouse"/>
</dbReference>
<dbReference type="PRO" id="PR:Q9CQW9"/>
<dbReference type="Proteomes" id="UP000000589">
    <property type="component" value="Chromosome 7"/>
</dbReference>
<dbReference type="RNAct" id="Q9CQW9">
    <property type="molecule type" value="protein"/>
</dbReference>
<dbReference type="Bgee" id="ENSMUSG00000025492">
    <property type="expression patterns" value="Expressed in aortic valve and 260 other cell types or tissues"/>
</dbReference>
<dbReference type="GO" id="GO:0045177">
    <property type="term" value="C:apical part of cell"/>
    <property type="evidence" value="ECO:0000314"/>
    <property type="project" value="MGI"/>
</dbReference>
<dbReference type="GO" id="GO:0009986">
    <property type="term" value="C:cell surface"/>
    <property type="evidence" value="ECO:0000314"/>
    <property type="project" value="MGI"/>
</dbReference>
<dbReference type="GO" id="GO:0005737">
    <property type="term" value="C:cytoplasm"/>
    <property type="evidence" value="ECO:0000314"/>
    <property type="project" value="MGI"/>
</dbReference>
<dbReference type="GO" id="GO:0031410">
    <property type="term" value="C:cytoplasmic vesicle"/>
    <property type="evidence" value="ECO:0000314"/>
    <property type="project" value="MGI"/>
</dbReference>
<dbReference type="GO" id="GO:0031901">
    <property type="term" value="C:early endosome membrane"/>
    <property type="evidence" value="ECO:0000250"/>
    <property type="project" value="UniProtKB"/>
</dbReference>
<dbReference type="GO" id="GO:0005783">
    <property type="term" value="C:endoplasmic reticulum"/>
    <property type="evidence" value="ECO:0000314"/>
    <property type="project" value="MGI"/>
</dbReference>
<dbReference type="GO" id="GO:0031902">
    <property type="term" value="C:late endosome membrane"/>
    <property type="evidence" value="ECO:0007669"/>
    <property type="project" value="UniProtKB-SubCell"/>
</dbReference>
<dbReference type="GO" id="GO:0005765">
    <property type="term" value="C:lysosomal membrane"/>
    <property type="evidence" value="ECO:0000250"/>
    <property type="project" value="UniProtKB"/>
</dbReference>
<dbReference type="GO" id="GO:0005634">
    <property type="term" value="C:nucleus"/>
    <property type="evidence" value="ECO:0000314"/>
    <property type="project" value="MGI"/>
</dbReference>
<dbReference type="GO" id="GO:0048471">
    <property type="term" value="C:perinuclear region of cytoplasm"/>
    <property type="evidence" value="ECO:0007669"/>
    <property type="project" value="UniProtKB-SubCell"/>
</dbReference>
<dbReference type="GO" id="GO:0005886">
    <property type="term" value="C:plasma membrane"/>
    <property type="evidence" value="ECO:0000314"/>
    <property type="project" value="MGI"/>
</dbReference>
<dbReference type="GO" id="GO:0032991">
    <property type="term" value="C:protein-containing complex"/>
    <property type="evidence" value="ECO:0000266"/>
    <property type="project" value="MGI"/>
</dbReference>
<dbReference type="GO" id="GO:0051607">
    <property type="term" value="P:defense response to virus"/>
    <property type="evidence" value="ECO:0000314"/>
    <property type="project" value="MGI"/>
</dbReference>
<dbReference type="GO" id="GO:0046597">
    <property type="term" value="P:host-mediated suppression of symbiont invasion"/>
    <property type="evidence" value="ECO:0000314"/>
    <property type="project" value="UniProtKB"/>
</dbReference>
<dbReference type="GO" id="GO:0008285">
    <property type="term" value="P:negative regulation of cell population proliferation"/>
    <property type="evidence" value="ECO:0000314"/>
    <property type="project" value="MGI"/>
</dbReference>
<dbReference type="GO" id="GO:0006898">
    <property type="term" value="P:receptor-mediated endocytosis"/>
    <property type="evidence" value="ECO:0000315"/>
    <property type="project" value="MGI"/>
</dbReference>
<dbReference type="GO" id="GO:0009615">
    <property type="term" value="P:response to virus"/>
    <property type="evidence" value="ECO:0000314"/>
    <property type="project" value="UniProtKB"/>
</dbReference>
<dbReference type="GO" id="GO:0060337">
    <property type="term" value="P:type I interferon-mediated signaling pathway"/>
    <property type="evidence" value="ECO:0000314"/>
    <property type="project" value="MGI"/>
</dbReference>
<dbReference type="InterPro" id="IPR007593">
    <property type="entry name" value="CD225/Dispanin_fam"/>
</dbReference>
<dbReference type="InterPro" id="IPR051517">
    <property type="entry name" value="IFITM_antiviral_protein"/>
</dbReference>
<dbReference type="PANTHER" id="PTHR13999">
    <property type="entry name" value="INTERFERON INDUCIBLE TRANSMEMBRANE PROTEIN"/>
    <property type="match status" value="1"/>
</dbReference>
<dbReference type="PANTHER" id="PTHR13999:SF4">
    <property type="entry name" value="INTERFERON-INDUCED TRANSMEMBRANE PROTEIN 3"/>
    <property type="match status" value="1"/>
</dbReference>
<dbReference type="Pfam" id="PF04505">
    <property type="entry name" value="CD225"/>
    <property type="match status" value="1"/>
</dbReference>
<comment type="function">
    <text evidence="3 9 10 11 12">IFN-induced antiviral protein which disrupts intracellular cholesterol homeostasis. Inhibits the entry of viruses to the host cell cytoplasm by preventing viral fusion with cholesterol depleted endosomes. May inactivate new enveloped viruses which buds out of the infected cell, by letting them go out with a cholesterol depleted membrane. Active against multiple viruses, including influenza A virus, SARS coronaviruses (SARS-CoV and SARS-CoV-2), Marburg virus (MARV), Ebola virus (EBOV), Dengue virus (DNV), West Nile virus (WNV), human immunodeficiency virus type 1 (HIV-1), hepatitis C virus (HCV) and vesicular stomatitis virus (VSV) (PubMed:33270927). Can inhibit: influenza virus hemagglutinin protein-mediated viral entry, MARV and EBOV GP1,2-mediated viral entry, SARS-CoV and SARS-CoV-2 S protein-mediated viral entry and VSV G protein-mediated viral entry (PubMed:33270927). Plays a critical role in the structural stability and function of vacuolar ATPase (v-ATPase). Establishes physical contact with the v-ATPase of endosomes which is critical for proper clathrin localization and is also required for the function of the v-ATPase to lower the pH in phagocytic endosomes thus establishing an antiviral state. In hepatocytes, IFITM proteins act in a coordinated manner to restrict HCV infection by targeting the endocytosed HCV virion for lysosomal degradation. IFITM2 and IFITM3 display anti-HCV activity that may complement the anti-HCV activity of IFITM1 by inhibiting the late stages of HCV entry, possibly in a coordinated manner by trapping the virion in the endosomal pathway and targeting it for degradation at the lysosome. Exerts opposing activities on SARS-CoV-2, including amphipathicity-dependent restriction of virus at endosomes and amphipathicity-independent enhancement of infection at the plasma membrane.</text>
</comment>
<comment type="subunit">
    <text evidence="1 8 11">Interacts with ATP6V0B (PubMed:22467717). Interacts with CD81 (PubMed:16395393). Interacts with SPP1; the interaction reduces OPN expression (By similarity). Interacts with BRI3 (By similarity).</text>
</comment>
<comment type="subcellular location">
    <subcellularLocation>
        <location evidence="1">Cell membrane</location>
        <topology evidence="1">Single-pass type II membrane protein</topology>
    </subcellularLocation>
    <subcellularLocation>
        <location evidence="12">Late endosome membrane</location>
        <topology evidence="1">Single-pass type II membrane protein</topology>
    </subcellularLocation>
    <subcellularLocation>
        <location evidence="12">Early endosome membrane</location>
        <topology evidence="1">Single-pass type II membrane protein</topology>
    </subcellularLocation>
    <subcellularLocation>
        <location evidence="12">Lysosome membrane</location>
        <topology evidence="1">Single-pass type II membrane protein</topology>
    </subcellularLocation>
    <subcellularLocation>
        <location evidence="1">Cytoplasm</location>
        <location evidence="1">Perinuclear region</location>
    </subcellularLocation>
    <text evidence="1">Co-localizes with BRI3 isoform 1 at the perinuclear region.</text>
</comment>
<comment type="tissue specificity">
    <text evidence="4 6">Expressed in acinar cell. Predominantly expressed in nascent primordial germ cells, as well as in gonadal germ cells.</text>
</comment>
<comment type="developmental stage">
    <text evidence="3 5 7">At 7.25 dpc strong expression is found at the base of the incipient allantois and weak expression in the mesodermal portion of the posterior amnion, and, importantly, the expression did not extend to the allantois. Expression persisted until the late bud stage (7.5 dpc), but gradually faded around the early head fold stage (7.75 dpc). At an earlier stage, only weak expression is seen throughout the epiblast in 6.0 dpc. But around 6.25-6.5 dpc (before gastrulation), marked expression is evident within the most proximal layer of the epiblast that is in intimate contact with the extraembryonic ectoderm. Expression is indeed induced by extraembryonic ectoderm through signaling molecules. During germ cell formation, is expressed in putative PGC ancestors in embryos at 6.5-7.5 dpc. In migrating PGCs, expression is continuous. After the beginning of gastrulation, the expression migrates to the posterior end of the developing primitive streak at the early/mid streak stage and became very intense in the position where PGCs (Primordial germ cells) differentiate from late streak stage onward.</text>
</comment>
<comment type="induction">
    <text evidence="6">By alpha interferon. Induced in pancreas during caerulein-induced pancreatitis. Induced in pancreas under systemic-lipopolysaccharide treatment and in intestine under Salmonella infection.</text>
</comment>
<comment type="PTM">
    <text evidence="1">Polyubiquitinated with both 'Lys-48' and 'Lys-63' linkages. Ubiquitination negatively regulates antiviral activity. Lys-24 is the most prevalent ubiquitination site.</text>
</comment>
<comment type="PTM">
    <text evidence="1">Phosphorylation at Tyr-20 is required for endosomal and lysosomal location.</text>
</comment>
<comment type="similarity">
    <text evidence="13">Belongs to the CD225/Dispanin family.</text>
</comment>
<comment type="caution">
    <text evidence="14">It has been previously shown that mediates migration of early primordial germ cells (PGCs) (PubMed:16326387). But according to PubMed:16326387, have no detectable effects on development of the germ line or on the generation of live young, hence, is not essential for PGC migration.</text>
</comment>
<keyword id="KW-0051">Antiviral defense</keyword>
<keyword id="KW-1003">Cell membrane</keyword>
<keyword id="KW-0963">Cytoplasm</keyword>
<keyword id="KW-0967">Endosome</keyword>
<keyword id="KW-0391">Immunity</keyword>
<keyword id="KW-0399">Innate immunity</keyword>
<keyword id="KW-1017">Isopeptide bond</keyword>
<keyword id="KW-0449">Lipoprotein</keyword>
<keyword id="KW-0458">Lysosome</keyword>
<keyword id="KW-0472">Membrane</keyword>
<keyword id="KW-0564">Palmitate</keyword>
<keyword id="KW-0597">Phosphoprotein</keyword>
<keyword id="KW-1185">Reference proteome</keyword>
<keyword id="KW-0735">Signal-anchor</keyword>
<keyword id="KW-0812">Transmembrane</keyword>
<keyword id="KW-1133">Transmembrane helix</keyword>
<keyword id="KW-0832">Ubl conjugation</keyword>
<evidence type="ECO:0000250" key="1">
    <source>
        <dbReference type="UniProtKB" id="Q01628"/>
    </source>
</evidence>
<evidence type="ECO:0000255" key="2"/>
<evidence type="ECO:0000269" key="3">
    <source>
    </source>
</evidence>
<evidence type="ECO:0000269" key="4">
    <source>
    </source>
</evidence>
<evidence type="ECO:0000269" key="5">
    <source>
    </source>
</evidence>
<evidence type="ECO:0000269" key="6">
    <source>
    </source>
</evidence>
<evidence type="ECO:0000269" key="7">
    <source>
    </source>
</evidence>
<evidence type="ECO:0000269" key="8">
    <source>
    </source>
</evidence>
<evidence type="ECO:0000269" key="9">
    <source>
    </source>
</evidence>
<evidence type="ECO:0000269" key="10">
    <source>
    </source>
</evidence>
<evidence type="ECO:0000269" key="11">
    <source>
    </source>
</evidence>
<evidence type="ECO:0000269" key="12">
    <source>
    </source>
</evidence>
<evidence type="ECO:0000305" key="13"/>
<evidence type="ECO:0000305" key="14">
    <source>
    </source>
</evidence>
<evidence type="ECO:0000312" key="15">
    <source>
        <dbReference type="MGI" id="MGI:1913391"/>
    </source>
</evidence>
<evidence type="ECO:0007744" key="16">
    <source>
    </source>
</evidence>
<sequence>MNHTSQAFITAASGGQPPNYERIKEEYEVAEMGAPHGSASVRTTVINMPREVSVPDHVVWSLFNTLFMNFCCLGFIAYAYSVKSRDRKMVGDVTGAQAYASTAKCLNISTLVLSILMVVITIVSVIIIVLNAQNLHT</sequence>
<organism>
    <name type="scientific">Mus musculus</name>
    <name type="common">Mouse</name>
    <dbReference type="NCBI Taxonomy" id="10090"/>
    <lineage>
        <taxon>Eukaryota</taxon>
        <taxon>Metazoa</taxon>
        <taxon>Chordata</taxon>
        <taxon>Craniata</taxon>
        <taxon>Vertebrata</taxon>
        <taxon>Euteleostomi</taxon>
        <taxon>Mammalia</taxon>
        <taxon>Eutheria</taxon>
        <taxon>Euarchontoglires</taxon>
        <taxon>Glires</taxon>
        <taxon>Rodentia</taxon>
        <taxon>Myomorpha</taxon>
        <taxon>Muroidea</taxon>
        <taxon>Muridae</taxon>
        <taxon>Murinae</taxon>
        <taxon>Mus</taxon>
        <taxon>Mus</taxon>
    </lineage>
</organism>
<accession>Q9CQW9</accession>
<accession>Q9D8L6</accession>
<name>IFM3_MOUSE</name>
<protein>
    <recommendedName>
        <fullName evidence="13">Interferon-induced transmembrane protein 3</fullName>
    </recommendedName>
    <alternativeName>
        <fullName>Dispanin subfamily A member 2b</fullName>
        <shortName>DSPA2b</shortName>
    </alternativeName>
    <alternativeName>
        <fullName>Fragilis protein</fullName>
    </alternativeName>
    <alternativeName>
        <fullName>Interferon-inducible protein 15</fullName>
    </alternativeName>
    <alternativeName>
        <fullName>Mouse ifitm-like protein 1</fullName>
        <shortName>Mil-1</shortName>
    </alternativeName>
</protein>